<keyword id="KW-0225">Disease variant</keyword>
<keyword id="KW-1015">Disulfide bond</keyword>
<keyword id="KW-0272">Extracellular matrix</keyword>
<keyword id="KW-0325">Glycoprotein</keyword>
<keyword id="KW-0433">Leucine-rich repeat</keyword>
<keyword id="KW-0654">Proteoglycan</keyword>
<keyword id="KW-1267">Proteomics identification</keyword>
<keyword id="KW-1185">Reference proteome</keyword>
<keyword id="KW-0677">Repeat</keyword>
<keyword id="KW-0964">Secreted</keyword>
<keyword id="KW-0716">Sensory transduction</keyword>
<keyword id="KW-0732">Signal</keyword>
<keyword id="KW-0844">Vision</keyword>
<proteinExistence type="evidence at protein level"/>
<gene>
    <name type="primary">KERA</name>
    <name type="synonym">SLRR2B</name>
</gene>
<feature type="signal peptide" evidence="3">
    <location>
        <begin position="1"/>
        <end position="20"/>
    </location>
</feature>
<feature type="chain" id="PRO_0000032748" description="Keratocan">
    <location>
        <begin position="21"/>
        <end position="352"/>
    </location>
</feature>
<feature type="domain" description="LRRNT">
    <location>
        <begin position="33"/>
        <end position="71"/>
    </location>
</feature>
<feature type="repeat" description="LRR 1">
    <location>
        <begin position="72"/>
        <end position="93"/>
    </location>
</feature>
<feature type="repeat" description="LRR 2">
    <location>
        <begin position="96"/>
        <end position="117"/>
    </location>
</feature>
<feature type="repeat" description="LRR 3">
    <location>
        <begin position="122"/>
        <end position="142"/>
    </location>
</feature>
<feature type="repeat" description="LRR 4">
    <location>
        <begin position="143"/>
        <end position="164"/>
    </location>
</feature>
<feature type="repeat" description="LRR 5">
    <location>
        <begin position="167"/>
        <end position="180"/>
    </location>
</feature>
<feature type="repeat" description="LRR 6">
    <location>
        <begin position="193"/>
        <end position="213"/>
    </location>
</feature>
<feature type="repeat" description="LRR 7">
    <location>
        <begin position="214"/>
        <end position="235"/>
    </location>
</feature>
<feature type="repeat" description="LRR 8">
    <location>
        <begin position="238"/>
        <end position="258"/>
    </location>
</feature>
<feature type="repeat" description="LRR 9">
    <location>
        <begin position="263"/>
        <end position="282"/>
    </location>
</feature>
<feature type="repeat" description="LRR 10">
    <location>
        <begin position="283"/>
        <end position="304"/>
    </location>
</feature>
<feature type="glycosylation site" description="N-linked (GlcNAc...) (keratan sulfate) asparagine" evidence="1">
    <location>
        <position position="93"/>
    </location>
</feature>
<feature type="glycosylation site" description="N-linked (GlcNAc...) (keratan sulfate) asparagine" evidence="1">
    <location>
        <position position="167"/>
    </location>
</feature>
<feature type="glycosylation site" description="N-linked (GlcNAc...) asparagine" evidence="3">
    <location>
        <position position="222"/>
    </location>
</feature>
<feature type="glycosylation site" description="N-linked (GlcNAc...) asparagine" evidence="7">
    <location>
        <position position="298"/>
    </location>
</feature>
<feature type="disulfide bond" evidence="2">
    <location>
        <begin position="42"/>
        <end position="48"/>
    </location>
</feature>
<feature type="disulfide bond" evidence="2">
    <location>
        <begin position="46"/>
        <end position="58"/>
    </location>
</feature>
<feature type="disulfide bond" evidence="2">
    <location>
        <begin position="303"/>
        <end position="343"/>
    </location>
</feature>
<feature type="sequence variant" id="VAR_012753" description="In CNA2; dbSNP:rs121917862." evidence="6">
    <original>T</original>
    <variation>K</variation>
    <location>
        <position position="215"/>
    </location>
</feature>
<feature type="sequence variant" id="VAR_013564" description="In dbSNP:rs737111.">
    <original>V</original>
    <variation>G</variation>
    <location>
        <position position="235"/>
    </location>
</feature>
<feature type="sequence variant" id="VAR_012754" description="In CNA2; dbSNP:rs121917858." evidence="4">
    <original>N</original>
    <variation>S</variation>
    <location>
        <position position="247"/>
    </location>
</feature>
<reference key="1">
    <citation type="journal article" date="1999" name="DNA Seq.">
        <title>Structure and sequence of the gene encoding human keratocan.</title>
        <authorList>
            <person name="Tasheva E.S."/>
            <person name="Funderburgh J.L."/>
            <person name="Funderburgh M.L."/>
            <person name="Corpuz L.M."/>
            <person name="Conrad G.W."/>
        </authorList>
    </citation>
    <scope>NUCLEOTIDE SEQUENCE [GENOMIC DNA]</scope>
</reference>
<reference key="2">
    <citation type="journal article" date="2000" name="Nat. Genet.">
        <title>Mutations in KERA, encoding keratocan, cause cornea plana.</title>
        <authorList>
            <person name="Pellegata N.S."/>
            <person name="Dieguez-Lucena J.L."/>
            <person name="Joensuu T."/>
            <person name="Lau S."/>
            <person name="Montgomery K.T."/>
            <person name="Krahe R."/>
            <person name="Kivelae T."/>
            <person name="Kucherlapati R."/>
            <person name="Forsius H."/>
            <person name="de la Chapelle A."/>
        </authorList>
    </citation>
    <scope>NUCLEOTIDE SEQUENCE [MRNA]</scope>
    <scope>FUNCTION</scope>
    <scope>TISSUE SPECIFICITY</scope>
    <scope>VARIANT CNA2 SER-247</scope>
</reference>
<reference key="3">
    <citation type="journal article" date="2004" name="Genome Res.">
        <title>The status, quality, and expansion of the NIH full-length cDNA project: the Mammalian Gene Collection (MGC).</title>
        <authorList>
            <consortium name="The MGC Project Team"/>
        </authorList>
    </citation>
    <scope>NUCLEOTIDE SEQUENCE [LARGE SCALE MRNA]</scope>
    <source>
        <tissue>Duodenum</tissue>
    </source>
</reference>
<reference key="4">
    <citation type="journal article" date="2001" name="Mol. Med.">
        <title>Keratocan expression is increased in the stroma of keratoconus corneas.</title>
        <authorList>
            <person name="Wentz-Hunter K."/>
            <person name="Cheng E.L."/>
            <person name="Ueda J."/>
            <person name="Sugar J."/>
            <person name="Yue B.Y.J.T."/>
        </authorList>
    </citation>
    <scope>TISSUE SPECIFICITY</scope>
    <scope>UP-REGULATION IN KERATOCONUS CORNEAS</scope>
</reference>
<reference key="5">
    <citation type="journal article" date="2005" name="J. Proteome Res.">
        <title>Human plasma N-glycoproteome analysis by immunoaffinity subtraction, hydrazide chemistry, and mass spectrometry.</title>
        <authorList>
            <person name="Liu T."/>
            <person name="Qian W.-J."/>
            <person name="Gritsenko M.A."/>
            <person name="Camp D.G. II"/>
            <person name="Monroe M.E."/>
            <person name="Moore R.J."/>
            <person name="Smith R.D."/>
        </authorList>
    </citation>
    <scope>GLYCOSYLATION [LARGE SCALE ANALYSIS] AT ASN-298</scope>
    <source>
        <tissue>Plasma</tissue>
    </source>
</reference>
<reference key="6">
    <citation type="journal article" date="2001" name="Invest. Ophthalmol. Vis. Sci.">
        <title>A novel keratocan mutation causing autosomal recessive cornea plana.</title>
        <authorList>
            <person name="Lehmann O.J."/>
            <person name="El-ashry M.F."/>
            <person name="Ebenezer N.D."/>
            <person name="Ocaka L."/>
            <person name="Francis P.J."/>
            <person name="Wilkie S.E."/>
            <person name="Patel R.J."/>
            <person name="Ficker L."/>
            <person name="Jordan T."/>
            <person name="Khaw P.T."/>
            <person name="Bhattacharya S.S."/>
        </authorList>
    </citation>
    <scope>VARIANT CNA2 LYS-215</scope>
    <scope>FUNCTION</scope>
</reference>
<name>KERA_HUMAN</name>
<evidence type="ECO:0000250" key="1"/>
<evidence type="ECO:0000250" key="2">
    <source>
        <dbReference type="UniProtKB" id="P21793"/>
    </source>
</evidence>
<evidence type="ECO:0000255" key="3"/>
<evidence type="ECO:0000269" key="4">
    <source>
    </source>
</evidence>
<evidence type="ECO:0000269" key="5">
    <source>
    </source>
</evidence>
<evidence type="ECO:0000269" key="6">
    <source>
    </source>
</evidence>
<evidence type="ECO:0000269" key="7">
    <source>
    </source>
</evidence>
<evidence type="ECO:0000305" key="8"/>
<evidence type="ECO:0000305" key="9">
    <source>
    </source>
</evidence>
<evidence type="ECO:0000305" key="10">
    <source>
    </source>
</evidence>
<protein>
    <recommendedName>
        <fullName>Keratocan</fullName>
        <shortName>KTN</shortName>
    </recommendedName>
    <alternativeName>
        <fullName>Keratan sulfate proteoglycan keratocan</fullName>
    </alternativeName>
</protein>
<organism>
    <name type="scientific">Homo sapiens</name>
    <name type="common">Human</name>
    <dbReference type="NCBI Taxonomy" id="9606"/>
    <lineage>
        <taxon>Eukaryota</taxon>
        <taxon>Metazoa</taxon>
        <taxon>Chordata</taxon>
        <taxon>Craniata</taxon>
        <taxon>Vertebrata</taxon>
        <taxon>Euteleostomi</taxon>
        <taxon>Mammalia</taxon>
        <taxon>Eutheria</taxon>
        <taxon>Euarchontoglires</taxon>
        <taxon>Primates</taxon>
        <taxon>Haplorrhini</taxon>
        <taxon>Catarrhini</taxon>
        <taxon>Hominidae</taxon>
        <taxon>Homo</taxon>
    </lineage>
</organism>
<dbReference type="EMBL" id="AF065988">
    <property type="protein sequence ID" value="AAC17741.1"/>
    <property type="molecule type" value="Genomic_DNA"/>
</dbReference>
<dbReference type="EMBL" id="AF063301">
    <property type="protein sequence ID" value="AAC16390.1"/>
    <property type="molecule type" value="mRNA"/>
</dbReference>
<dbReference type="EMBL" id="AF205403">
    <property type="protein sequence ID" value="AAF69126.1"/>
    <property type="molecule type" value="mRNA"/>
</dbReference>
<dbReference type="EMBL" id="BC032667">
    <property type="protein sequence ID" value="AAH32667.1"/>
    <property type="molecule type" value="mRNA"/>
</dbReference>
<dbReference type="CCDS" id="CCDS9037.1"/>
<dbReference type="RefSeq" id="NP_008966.1">
    <property type="nucleotide sequence ID" value="NM_007035.4"/>
</dbReference>
<dbReference type="SMR" id="O60938"/>
<dbReference type="BioGRID" id="116264">
    <property type="interactions" value="26"/>
</dbReference>
<dbReference type="FunCoup" id="O60938">
    <property type="interactions" value="52"/>
</dbReference>
<dbReference type="IntAct" id="O60938">
    <property type="interactions" value="17"/>
</dbReference>
<dbReference type="MINT" id="O60938"/>
<dbReference type="STRING" id="9606.ENSP00000266719"/>
<dbReference type="GlyConnect" id="1432">
    <property type="glycosylation" value="2 N-Linked glycans (1 site)"/>
</dbReference>
<dbReference type="GlyCosmos" id="O60938">
    <property type="glycosylation" value="4 sites, 2 glycans"/>
</dbReference>
<dbReference type="GlyGen" id="O60938">
    <property type="glycosylation" value="5 sites, 2 N-linked glycans (1 site), 1 O-linked glycan (1 site)"/>
</dbReference>
<dbReference type="iPTMnet" id="O60938"/>
<dbReference type="PhosphoSitePlus" id="O60938"/>
<dbReference type="BioMuta" id="KERA"/>
<dbReference type="MassIVE" id="O60938"/>
<dbReference type="PaxDb" id="9606-ENSP00000266719"/>
<dbReference type="PeptideAtlas" id="O60938"/>
<dbReference type="ProteomicsDB" id="49681"/>
<dbReference type="Antibodypedia" id="30000">
    <property type="antibodies" value="135 antibodies from 24 providers"/>
</dbReference>
<dbReference type="DNASU" id="11081"/>
<dbReference type="Ensembl" id="ENST00000266719.4">
    <property type="protein sequence ID" value="ENSP00000266719.3"/>
    <property type="gene ID" value="ENSG00000139330.6"/>
</dbReference>
<dbReference type="GeneID" id="11081"/>
<dbReference type="KEGG" id="hsa:11081"/>
<dbReference type="MANE-Select" id="ENST00000266719.4">
    <property type="protein sequence ID" value="ENSP00000266719.3"/>
    <property type="RefSeq nucleotide sequence ID" value="NM_007035.4"/>
    <property type="RefSeq protein sequence ID" value="NP_008966.1"/>
</dbReference>
<dbReference type="UCSC" id="uc001tbl.4">
    <property type="organism name" value="human"/>
</dbReference>
<dbReference type="AGR" id="HGNC:6309"/>
<dbReference type="CTD" id="11081"/>
<dbReference type="DisGeNET" id="11081"/>
<dbReference type="GeneCards" id="KERA"/>
<dbReference type="HGNC" id="HGNC:6309">
    <property type="gene designation" value="KERA"/>
</dbReference>
<dbReference type="HPA" id="ENSG00000139330">
    <property type="expression patterns" value="Not detected"/>
</dbReference>
<dbReference type="MalaCards" id="KERA"/>
<dbReference type="MIM" id="217300">
    <property type="type" value="phenotype"/>
</dbReference>
<dbReference type="MIM" id="603288">
    <property type="type" value="gene"/>
</dbReference>
<dbReference type="neXtProt" id="NX_O60938"/>
<dbReference type="OpenTargets" id="ENSG00000139330"/>
<dbReference type="Orphanet" id="53691">
    <property type="disease" value="Congenital cornea plana"/>
</dbReference>
<dbReference type="PharmGKB" id="PA30088"/>
<dbReference type="VEuPathDB" id="HostDB:ENSG00000139330"/>
<dbReference type="eggNOG" id="KOG0619">
    <property type="taxonomic scope" value="Eukaryota"/>
</dbReference>
<dbReference type="GeneTree" id="ENSGT00940000158968"/>
<dbReference type="HOGENOM" id="CLU_000288_186_4_1"/>
<dbReference type="InParanoid" id="O60938"/>
<dbReference type="OMA" id="MECFCPP"/>
<dbReference type="OrthoDB" id="5789657at2759"/>
<dbReference type="PAN-GO" id="O60938">
    <property type="GO annotations" value="1 GO annotation based on evolutionary models"/>
</dbReference>
<dbReference type="PhylomeDB" id="O60938"/>
<dbReference type="TreeFam" id="TF334562"/>
<dbReference type="PathwayCommons" id="O60938"/>
<dbReference type="Reactome" id="R-HSA-2022854">
    <property type="pathway name" value="Keratan sulfate biosynthesis"/>
</dbReference>
<dbReference type="Reactome" id="R-HSA-2022857">
    <property type="pathway name" value="Keratan sulfate degradation"/>
</dbReference>
<dbReference type="Reactome" id="R-HSA-3656225">
    <property type="pathway name" value="Defective CHST6 causes MCDC1"/>
</dbReference>
<dbReference type="Reactome" id="R-HSA-3656243">
    <property type="pathway name" value="Defective ST3GAL3 causes MCT12 and EIEE15"/>
</dbReference>
<dbReference type="Reactome" id="R-HSA-3656244">
    <property type="pathway name" value="Defective B4GALT1 causes B4GALT1-CDG (CDG-2d)"/>
</dbReference>
<dbReference type="SignaLink" id="O60938"/>
<dbReference type="BioGRID-ORCS" id="11081">
    <property type="hits" value="26 hits in 1140 CRISPR screens"/>
</dbReference>
<dbReference type="GeneWiki" id="Keratocan"/>
<dbReference type="GenomeRNAi" id="11081"/>
<dbReference type="Pharos" id="O60938">
    <property type="development level" value="Tbio"/>
</dbReference>
<dbReference type="PRO" id="PR:O60938"/>
<dbReference type="Proteomes" id="UP000005640">
    <property type="component" value="Chromosome 12"/>
</dbReference>
<dbReference type="RNAct" id="O60938">
    <property type="molecule type" value="protein"/>
</dbReference>
<dbReference type="Bgee" id="ENSG00000139330">
    <property type="expression patterns" value="Expressed in calcaneal tendon and 67 other cell types or tissues"/>
</dbReference>
<dbReference type="GO" id="GO:0031012">
    <property type="term" value="C:extracellular matrix"/>
    <property type="evidence" value="ECO:0000303"/>
    <property type="project" value="UniProtKB"/>
</dbReference>
<dbReference type="GO" id="GO:0005576">
    <property type="term" value="C:extracellular region"/>
    <property type="evidence" value="ECO:0000304"/>
    <property type="project" value="Reactome"/>
</dbReference>
<dbReference type="GO" id="GO:0005615">
    <property type="term" value="C:extracellular space"/>
    <property type="evidence" value="ECO:0000318"/>
    <property type="project" value="GO_Central"/>
</dbReference>
<dbReference type="GO" id="GO:0005796">
    <property type="term" value="C:Golgi lumen"/>
    <property type="evidence" value="ECO:0000304"/>
    <property type="project" value="Reactome"/>
</dbReference>
<dbReference type="GO" id="GO:0043202">
    <property type="term" value="C:lysosomal lumen"/>
    <property type="evidence" value="ECO:0000304"/>
    <property type="project" value="Reactome"/>
</dbReference>
<dbReference type="GO" id="GO:0061303">
    <property type="term" value="P:cornea development in camera-type eye"/>
    <property type="evidence" value="ECO:0007669"/>
    <property type="project" value="Ensembl"/>
</dbReference>
<dbReference type="GO" id="GO:0007601">
    <property type="term" value="P:visual perception"/>
    <property type="evidence" value="ECO:0007669"/>
    <property type="project" value="UniProtKB-KW"/>
</dbReference>
<dbReference type="FunFam" id="3.80.10.10:FF:000092">
    <property type="entry name" value="keratocan isoform X1"/>
    <property type="match status" value="1"/>
</dbReference>
<dbReference type="FunFam" id="3.80.10.10:FF:000133">
    <property type="entry name" value="prolargin"/>
    <property type="match status" value="1"/>
</dbReference>
<dbReference type="Gene3D" id="3.80.10.10">
    <property type="entry name" value="Ribonuclease Inhibitor"/>
    <property type="match status" value="2"/>
</dbReference>
<dbReference type="InterPro" id="IPR001611">
    <property type="entry name" value="Leu-rich_rpt"/>
</dbReference>
<dbReference type="InterPro" id="IPR003591">
    <property type="entry name" value="Leu-rich_rpt_typical-subtyp"/>
</dbReference>
<dbReference type="InterPro" id="IPR032675">
    <property type="entry name" value="LRR_dom_sf"/>
</dbReference>
<dbReference type="InterPro" id="IPR000372">
    <property type="entry name" value="LRRNT"/>
</dbReference>
<dbReference type="InterPro" id="IPR050333">
    <property type="entry name" value="SLRP"/>
</dbReference>
<dbReference type="PANTHER" id="PTHR45712">
    <property type="entry name" value="AGAP008170-PA"/>
    <property type="match status" value="1"/>
</dbReference>
<dbReference type="PANTHER" id="PTHR45712:SF13">
    <property type="entry name" value="KERATOCAN"/>
    <property type="match status" value="1"/>
</dbReference>
<dbReference type="Pfam" id="PF13516">
    <property type="entry name" value="LRR_6"/>
    <property type="match status" value="1"/>
</dbReference>
<dbReference type="Pfam" id="PF13855">
    <property type="entry name" value="LRR_8"/>
    <property type="match status" value="2"/>
</dbReference>
<dbReference type="Pfam" id="PF01462">
    <property type="entry name" value="LRRNT"/>
    <property type="match status" value="1"/>
</dbReference>
<dbReference type="SMART" id="SM00364">
    <property type="entry name" value="LRR_BAC"/>
    <property type="match status" value="5"/>
</dbReference>
<dbReference type="SMART" id="SM00369">
    <property type="entry name" value="LRR_TYP"/>
    <property type="match status" value="6"/>
</dbReference>
<dbReference type="SMART" id="SM00013">
    <property type="entry name" value="LRRNT"/>
    <property type="match status" value="1"/>
</dbReference>
<dbReference type="SUPFAM" id="SSF52058">
    <property type="entry name" value="L domain-like"/>
    <property type="match status" value="1"/>
</dbReference>
<dbReference type="PROSITE" id="PS51450">
    <property type="entry name" value="LRR"/>
    <property type="match status" value="11"/>
</dbReference>
<comment type="function">
    <text evidence="9 10">May be important in developing and maintaining corneal transparency and for the structure of the stromal matrix.</text>
</comment>
<comment type="subcellular location">
    <subcellularLocation>
        <location evidence="1">Secreted</location>
        <location evidence="1">Extracellular space</location>
        <location evidence="1">Extracellular matrix</location>
    </subcellularLocation>
</comment>
<comment type="tissue specificity">
    <text evidence="4 5">Cornea (at protein level) (PubMed:10802664, PubMed:11683372). Increased expression in the stroma of keratoconus corneas (PubMed:11683372). Also detected in trachea, and in low levels, in intestine, skeletal muscle, ovary, lung and putamen (PubMed:10802664).</text>
</comment>
<comment type="PTM">
    <text evidence="1">Binds keratan sulfate chains.</text>
</comment>
<comment type="disease" evidence="4 6">
    <disease id="DI-02364">
        <name>Cornea plana 2, autosomal recessive</name>
        <acronym>CNA2</acronym>
        <description>A severe form of cornea plana, a rare ocular disorder characterized by flattened corneal curvature leading to a decrease in refraction, reduced visual activity, hyperopia, hazy corneal limbus, opacities in the corneal parenchyma, and marked arcus senilis often detected at an early age. CNA2 patients manifest extreme hyperopia and additional ocular anomalies such as malformations of the iris, a slit-like pupil, and adhesions between iris and cornea.</description>
        <dbReference type="MIM" id="217300"/>
    </disease>
    <text>The disease is caused by variants affecting the gene represented in this entry.</text>
</comment>
<comment type="similarity">
    <text evidence="8">Belongs to the small leucine-rich proteoglycan (SLRP) family. SLRP class II subfamily.</text>
</comment>
<sequence>MAGTICFIMWVLFITDTVWSRSVRQVYEVHDSDDWTIHDFECPMECFCPPSFPTALYCENRGLKEIPAIPSRIWYLYLQNNLIETIPEKPFENATQLRWINLNKNKITNYGIEKGALSQLKKLLFLFLEDNELEEVPSPLPRSLEQLQLARNKVSRIPQGTFSNLENLTLLDLQNNKLVDNAFQRDTFKGLKNLMQLNMAKNALRNMPPRLPANTMQLFLDNNSIEGIPENYFNVIPKVAFLRLNHNKLSDEGLPSRGFDVSSILDLQLSHNQLTKVPRISAHLQHLHLDHNKIKSVNVSVICPSPSMLPAERDSFSYGPHLRYLRLDGNEIKPPIPMALMTCFRLLQAVII</sequence>
<accession>O60938</accession>